<sequence length="386" mass="40454">MILGSLSRAGPLPLLRQPPIMQPPLDLKQILPFPLEPAPTLGLFSNYSTMDPVQKAVLSHTFGGPLLKTKRPVISCNICQIRFNSQSQAEAHYKGNRHARRVKGIEAAKTRGREPGVREPGDPAPPGSTPTNGDGVAPRPVSMENGLGPAPGSPEKQPGSPSPPSIPETGQGVTKGEGGTPAPASLPGGSKEEEEKAKRLLYCALCKVAVNSLSQLEAHNKGTKHKTILEARSGLGPIKAYPRLGPPTPGEPEAPAQDRTFHCEICNVKVNSEVQLKQHISSRRHRDGVAGKPNPLLSRHKKSRGAGELAGTLTFSKELPKSLAGGLLPSPLAVAAVMAAAAGSPLSLRPAPAAPLLQGPPITHPLLHPAPGPIRTAHGPILFSPY</sequence>
<protein>
    <recommendedName>
        <fullName>Zinc finger protein 385A</fullName>
    </recommendedName>
    <alternativeName>
        <fullName>Hematopoietic zinc finger protein</fullName>
    </alternativeName>
    <alternativeName>
        <fullName>Retinal zinc finger protein</fullName>
    </alternativeName>
</protein>
<comment type="function">
    <text evidence="4">RNA-binding protein that affects the localization and the translation of a subset of mRNA. May play a role in adipogenesis through binding to the 3'-UTR of CEBPA mRNA and regulation of its translation. Targets ITPR1 mRNA to dendrites in Purkinje cells, and may regulate its activity-dependent translation. With ELAVL1, binds the 3'-UTR of p53/TP53 mRNAs to control their nuclear export induced by CDKN2A. Hence, may regulate p53/TP53 expression and mediate in part the CDKN2A anti-proliferative activity. May also bind CCNB1 mRNA. Alternatively, may also regulate p53/TP53 activity through direct protein-protein interaction. Interacts with p53/TP53 and promotes cell-cycle arrest over apoptosis enhancing preferentially the DNA binding and transactivation of p53/TP53 on cell-cycle arrest target genes over proapoptotic target genes. May also regulate the ubiquitination and stability of CDKN1A promoting DNA damage-induced cell cycle arrest. Also plays a role in megakaryocytes differentiation.</text>
</comment>
<comment type="subunit">
    <text evidence="1 4">Interacts with ELAVL1; the interaction is indirect, mRNA-dependent and may regulate p53/TP53 expression (By similarity). Interacts with p53/TP53; the interaction is direct and enhances p53/TP53 transactivation functions on cell-cycle arrest target genes, resulting in growth arrest.</text>
</comment>
<comment type="subcellular location">
    <subcellularLocation>
        <location evidence="3">Cytoplasm</location>
    </subcellularLocation>
    <subcellularLocation>
        <location evidence="3">Nucleus</location>
        <location evidence="3">Nucleolus</location>
    </subcellularLocation>
    <subcellularLocation>
        <location evidence="1">Cell projection</location>
        <location evidence="1">Dendrite</location>
    </subcellularLocation>
    <text evidence="1">Detected in dendrites of Purkinje cells and hippocampal neurons.</text>
</comment>
<comment type="alternative products">
    <event type="alternative splicing"/>
    <isoform>
        <id>Q96PM9-4</id>
        <name>4</name>
        <sequence type="displayed"/>
    </isoform>
    <isoform>
        <id>Q96PM9-1</id>
        <name>1</name>
        <sequence type="described" ref="VSP_047448"/>
    </isoform>
    <isoform>
        <id>Q96PM9-2</id>
        <name>2</name>
        <sequence type="described" ref="VSP_047448 VSP_047449"/>
    </isoform>
    <isoform>
        <id>Q96PM9-3</id>
        <name>3</name>
        <sequence type="described" ref="VSP_047449"/>
    </isoform>
</comment>
<comment type="tissue specificity">
    <text evidence="3">Expressed predominantly in the retina.</text>
</comment>
<comment type="induction">
    <text evidence="4">Up-regulated by p53/TP53 in response to DNA damage and oxidative stress.</text>
</comment>
<comment type="PTM">
    <text evidence="4">Ubiquitinated upon prolonged exposure to genotoxic stress, which leads to proteasomal degradation of ZNF385A and releases p53/TP53 from cell-cycle arrest target gene promoters.</text>
</comment>
<feature type="chain" id="PRO_0000047554" description="Zinc finger protein 385A">
    <location>
        <begin position="1"/>
        <end position="386"/>
    </location>
</feature>
<feature type="zinc finger region" description="Matrin-type 1">
    <location>
        <begin position="74"/>
        <end position="98"/>
    </location>
</feature>
<feature type="zinc finger region" description="Matrin-type 2">
    <location>
        <begin position="201"/>
        <end position="225"/>
    </location>
</feature>
<feature type="zinc finger region" description="Matrin-type 3">
    <location>
        <begin position="261"/>
        <end position="285"/>
    </location>
</feature>
<feature type="region of interest" description="Disordered" evidence="2">
    <location>
        <begin position="90"/>
        <end position="193"/>
    </location>
</feature>
<feature type="region of interest" description="Necessary for binding to ITPR1, CEBPA and p53/TP53 mRNAs" evidence="1">
    <location>
        <begin position="145"/>
        <end position="351"/>
    </location>
</feature>
<feature type="region of interest" description="Disordered" evidence="2">
    <location>
        <begin position="279"/>
        <end position="309"/>
    </location>
</feature>
<feature type="compositionally biased region" description="Basic and acidic residues" evidence="2">
    <location>
        <begin position="103"/>
        <end position="121"/>
    </location>
</feature>
<feature type="modified residue" description="Phosphoserine" evidence="10">
    <location>
        <position position="185"/>
    </location>
</feature>
<feature type="modified residue" description="Phosphothreonine" evidence="10">
    <location>
        <position position="248"/>
    </location>
</feature>
<feature type="splice variant" id="VSP_047448" description="In isoform 1 and isoform 2." evidence="5 6 7 8">
    <original>MILGSLSRAGPLPLLRQPPIM</original>
    <variation>M</variation>
    <location>
        <begin position="1"/>
        <end position="21"/>
    </location>
</feature>
<feature type="splice variant" id="VSP_047449" description="In isoform 2 and isoform 3." evidence="5 9">
    <location>
        <begin position="141"/>
        <end position="221"/>
    </location>
</feature>
<gene>
    <name type="primary">ZNF385A</name>
    <name type="synonym">HZF</name>
    <name type="synonym">RZF</name>
    <name type="synonym">ZNF385</name>
</gene>
<keyword id="KW-0025">Alternative splicing</keyword>
<keyword id="KW-0966">Cell projection</keyword>
<keyword id="KW-0963">Cytoplasm</keyword>
<keyword id="KW-0227">DNA damage</keyword>
<keyword id="KW-0238">DNA-binding</keyword>
<keyword id="KW-0479">Metal-binding</keyword>
<keyword id="KW-0539">Nucleus</keyword>
<keyword id="KW-0597">Phosphoprotein</keyword>
<keyword id="KW-1267">Proteomics identification</keyword>
<keyword id="KW-1185">Reference proteome</keyword>
<keyword id="KW-0677">Repeat</keyword>
<keyword id="KW-0694">RNA-binding</keyword>
<keyword id="KW-0804">Transcription</keyword>
<keyword id="KW-0805">Transcription regulation</keyword>
<keyword id="KW-0810">Translation regulation</keyword>
<keyword id="KW-0832">Ubl conjugation</keyword>
<keyword id="KW-0862">Zinc</keyword>
<keyword id="KW-0863">Zinc-finger</keyword>
<organism>
    <name type="scientific">Homo sapiens</name>
    <name type="common">Human</name>
    <dbReference type="NCBI Taxonomy" id="9606"/>
    <lineage>
        <taxon>Eukaryota</taxon>
        <taxon>Metazoa</taxon>
        <taxon>Chordata</taxon>
        <taxon>Craniata</taxon>
        <taxon>Vertebrata</taxon>
        <taxon>Euteleostomi</taxon>
        <taxon>Mammalia</taxon>
        <taxon>Eutheria</taxon>
        <taxon>Euarchontoglires</taxon>
        <taxon>Primates</taxon>
        <taxon>Haplorrhini</taxon>
        <taxon>Catarrhini</taxon>
        <taxon>Hominidae</taxon>
        <taxon>Homo</taxon>
    </lineage>
</organism>
<proteinExistence type="evidence at protein level"/>
<name>Z385A_HUMAN</name>
<accession>Q96PM9</accession>
<accession>B2RDN5</accession>
<accession>B4DKH2</accession>
<accession>F1T0F1</accession>
<accession>J3KNS3</accession>
<accession>Q5VH53</accession>
<accession>Q9H7R6</accession>
<accession>Q9UFU3</accession>
<evidence type="ECO:0000250" key="1"/>
<evidence type="ECO:0000256" key="2">
    <source>
        <dbReference type="SAM" id="MobiDB-lite"/>
    </source>
</evidence>
<evidence type="ECO:0000269" key="3">
    <source>
    </source>
</evidence>
<evidence type="ECO:0000269" key="4">
    <source>
    </source>
</evidence>
<evidence type="ECO:0000303" key="5">
    <source>
    </source>
</evidence>
<evidence type="ECO:0000303" key="6">
    <source>
    </source>
</evidence>
<evidence type="ECO:0000303" key="7">
    <source>
    </source>
</evidence>
<evidence type="ECO:0000303" key="8">
    <source ref="2"/>
</evidence>
<evidence type="ECO:0000303" key="9">
    <source ref="4"/>
</evidence>
<evidence type="ECO:0007744" key="10">
    <source>
    </source>
</evidence>
<reference key="1">
    <citation type="journal article" date="2004" name="Gene">
        <title>RZF, a zinc-finger protein in the photoreceptors of human retina.</title>
        <authorList>
            <person name="Sharma S."/>
            <person name="Dimasi D."/>
            <person name="Higginson K."/>
            <person name="Della N.G."/>
        </authorList>
    </citation>
    <scope>NUCLEOTIDE SEQUENCE [MRNA] (ISOFORM 1)</scope>
    <scope>TISSUE SPECIFICITY</scope>
    <scope>SUBCELLULAR LOCATION</scope>
    <source>
        <tissue>Retina</tissue>
    </source>
</reference>
<reference key="2">
    <citation type="submission" date="2000-09" db="EMBL/GenBank/DDBJ databases">
        <title>Homo sapiens hematopoietic zinc finger protein mRNA.</title>
        <authorList>
            <person name="Qu X."/>
            <person name="Zhai Y."/>
            <person name="Zhang C."/>
            <person name="Wu S."/>
            <person name="Zhang Y."/>
            <person name="Xing G."/>
            <person name="Wei H."/>
            <person name="Yu Y."/>
            <person name="Wang M."/>
            <person name="He F."/>
        </authorList>
    </citation>
    <scope>NUCLEOTIDE SEQUENCE [MRNA] (ISOFORM 1)</scope>
    <source>
        <tissue>Liver</tissue>
    </source>
</reference>
<reference key="3">
    <citation type="journal article" date="2004" name="Nat. Genet.">
        <title>Complete sequencing and characterization of 21,243 full-length human cDNAs.</title>
        <authorList>
            <person name="Ota T."/>
            <person name="Suzuki Y."/>
            <person name="Nishikawa T."/>
            <person name="Otsuki T."/>
            <person name="Sugiyama T."/>
            <person name="Irie R."/>
            <person name="Wakamatsu A."/>
            <person name="Hayashi K."/>
            <person name="Sato H."/>
            <person name="Nagai K."/>
            <person name="Kimura K."/>
            <person name="Makita H."/>
            <person name="Sekine M."/>
            <person name="Obayashi M."/>
            <person name="Nishi T."/>
            <person name="Shibahara T."/>
            <person name="Tanaka T."/>
            <person name="Ishii S."/>
            <person name="Yamamoto J."/>
            <person name="Saito K."/>
            <person name="Kawai Y."/>
            <person name="Isono Y."/>
            <person name="Nakamura Y."/>
            <person name="Nagahari K."/>
            <person name="Murakami K."/>
            <person name="Yasuda T."/>
            <person name="Iwayanagi T."/>
            <person name="Wagatsuma M."/>
            <person name="Shiratori A."/>
            <person name="Sudo H."/>
            <person name="Hosoiri T."/>
            <person name="Kaku Y."/>
            <person name="Kodaira H."/>
            <person name="Kondo H."/>
            <person name="Sugawara M."/>
            <person name="Takahashi M."/>
            <person name="Kanda K."/>
            <person name="Yokoi T."/>
            <person name="Furuya T."/>
            <person name="Kikkawa E."/>
            <person name="Omura Y."/>
            <person name="Abe K."/>
            <person name="Kamihara K."/>
            <person name="Katsuta N."/>
            <person name="Sato K."/>
            <person name="Tanikawa M."/>
            <person name="Yamazaki M."/>
            <person name="Ninomiya K."/>
            <person name="Ishibashi T."/>
            <person name="Yamashita H."/>
            <person name="Murakawa K."/>
            <person name="Fujimori K."/>
            <person name="Tanai H."/>
            <person name="Kimata M."/>
            <person name="Watanabe M."/>
            <person name="Hiraoka S."/>
            <person name="Chiba Y."/>
            <person name="Ishida S."/>
            <person name="Ono Y."/>
            <person name="Takiguchi S."/>
            <person name="Watanabe S."/>
            <person name="Yosida M."/>
            <person name="Hotuta T."/>
            <person name="Kusano J."/>
            <person name="Kanehori K."/>
            <person name="Takahashi-Fujii A."/>
            <person name="Hara H."/>
            <person name="Tanase T.-O."/>
            <person name="Nomura Y."/>
            <person name="Togiya S."/>
            <person name="Komai F."/>
            <person name="Hara R."/>
            <person name="Takeuchi K."/>
            <person name="Arita M."/>
            <person name="Imose N."/>
            <person name="Musashino K."/>
            <person name="Yuuki H."/>
            <person name="Oshima A."/>
            <person name="Sasaki N."/>
            <person name="Aotsuka S."/>
            <person name="Yoshikawa Y."/>
            <person name="Matsunawa H."/>
            <person name="Ichihara T."/>
            <person name="Shiohata N."/>
            <person name="Sano S."/>
            <person name="Moriya S."/>
            <person name="Momiyama H."/>
            <person name="Satoh N."/>
            <person name="Takami S."/>
            <person name="Terashima Y."/>
            <person name="Suzuki O."/>
            <person name="Nakagawa S."/>
            <person name="Senoh A."/>
            <person name="Mizoguchi H."/>
            <person name="Goto Y."/>
            <person name="Shimizu F."/>
            <person name="Wakebe H."/>
            <person name="Hishigaki H."/>
            <person name="Watanabe T."/>
            <person name="Sugiyama A."/>
            <person name="Takemoto M."/>
            <person name="Kawakami B."/>
            <person name="Yamazaki M."/>
            <person name="Watanabe K."/>
            <person name="Kumagai A."/>
            <person name="Itakura S."/>
            <person name="Fukuzumi Y."/>
            <person name="Fujimori Y."/>
            <person name="Komiyama M."/>
            <person name="Tashiro H."/>
            <person name="Tanigami A."/>
            <person name="Fujiwara T."/>
            <person name="Ono T."/>
            <person name="Yamada K."/>
            <person name="Fujii Y."/>
            <person name="Ozaki K."/>
            <person name="Hirao M."/>
            <person name="Ohmori Y."/>
            <person name="Kawabata A."/>
            <person name="Hikiji T."/>
            <person name="Kobatake N."/>
            <person name="Inagaki H."/>
            <person name="Ikema Y."/>
            <person name="Okamoto S."/>
            <person name="Okitani R."/>
            <person name="Kawakami T."/>
            <person name="Noguchi S."/>
            <person name="Itoh T."/>
            <person name="Shigeta K."/>
            <person name="Senba T."/>
            <person name="Matsumura K."/>
            <person name="Nakajima Y."/>
            <person name="Mizuno T."/>
            <person name="Morinaga M."/>
            <person name="Sasaki M."/>
            <person name="Togashi T."/>
            <person name="Oyama M."/>
            <person name="Hata H."/>
            <person name="Watanabe M."/>
            <person name="Komatsu T."/>
            <person name="Mizushima-Sugano J."/>
            <person name="Satoh T."/>
            <person name="Shirai Y."/>
            <person name="Takahashi Y."/>
            <person name="Nakagawa K."/>
            <person name="Okumura K."/>
            <person name="Nagase T."/>
            <person name="Nomura N."/>
            <person name="Kikuchi H."/>
            <person name="Masuho Y."/>
            <person name="Yamashita R."/>
            <person name="Nakai K."/>
            <person name="Yada T."/>
            <person name="Nakamura Y."/>
            <person name="Ohara O."/>
            <person name="Isogai T."/>
            <person name="Sugano S."/>
        </authorList>
    </citation>
    <scope>NUCLEOTIDE SEQUENCE [LARGE SCALE MRNA] (ISOFORMS 1; 2 AND 3)</scope>
    <source>
        <tissue>Thyroid</tissue>
        <tissue>Umbilical cord blood</tissue>
    </source>
</reference>
<reference key="4">
    <citation type="submission" date="2004-06" db="EMBL/GenBank/DDBJ databases">
        <title>Cloning of human full open reading frames in Gateway(TM) system entry vector (pDONR201).</title>
        <authorList>
            <person name="Ebert L."/>
            <person name="Schick M."/>
            <person name="Neubert P."/>
            <person name="Schatten R."/>
            <person name="Henze S."/>
            <person name="Korn B."/>
        </authorList>
    </citation>
    <scope>NUCLEOTIDE SEQUENCE [LARGE SCALE MRNA] (ISOFORM 3)</scope>
</reference>
<reference key="5">
    <citation type="journal article" date="2011" name="Invest. Ophthalmol. Vis. Sci.">
        <title>Full-length transcriptome analysis of human retina-derived cell lines ARPE-19 and Y79 using the vector-capping method.</title>
        <authorList>
            <person name="Oshikawa M."/>
            <person name="Tsutsui C."/>
            <person name="Ikegami T."/>
            <person name="Fuchida Y."/>
            <person name="Matsubara M."/>
            <person name="Toyama S."/>
            <person name="Usami R."/>
            <person name="Ohtoko K."/>
            <person name="Kato S."/>
        </authorList>
    </citation>
    <scope>NUCLEOTIDE SEQUENCE [LARGE SCALE MRNA] (ISOFORM 1)</scope>
</reference>
<reference key="6">
    <citation type="journal article" date="2006" name="Nature">
        <title>The finished DNA sequence of human chromosome 12.</title>
        <authorList>
            <person name="Scherer S.E."/>
            <person name="Muzny D.M."/>
            <person name="Buhay C.J."/>
            <person name="Chen R."/>
            <person name="Cree A."/>
            <person name="Ding Y."/>
            <person name="Dugan-Rocha S."/>
            <person name="Gill R."/>
            <person name="Gunaratne P."/>
            <person name="Harris R.A."/>
            <person name="Hawes A.C."/>
            <person name="Hernandez J."/>
            <person name="Hodgson A.V."/>
            <person name="Hume J."/>
            <person name="Jackson A."/>
            <person name="Khan Z.M."/>
            <person name="Kovar-Smith C."/>
            <person name="Lewis L.R."/>
            <person name="Lozado R.J."/>
            <person name="Metzker M.L."/>
            <person name="Milosavljevic A."/>
            <person name="Miner G.R."/>
            <person name="Montgomery K.T."/>
            <person name="Morgan M.B."/>
            <person name="Nazareth L.V."/>
            <person name="Scott G."/>
            <person name="Sodergren E."/>
            <person name="Song X.-Z."/>
            <person name="Steffen D."/>
            <person name="Lovering R.C."/>
            <person name="Wheeler D.A."/>
            <person name="Worley K.C."/>
            <person name="Yuan Y."/>
            <person name="Zhang Z."/>
            <person name="Adams C.Q."/>
            <person name="Ansari-Lari M.A."/>
            <person name="Ayele M."/>
            <person name="Brown M.J."/>
            <person name="Chen G."/>
            <person name="Chen Z."/>
            <person name="Clerc-Blankenburg K.P."/>
            <person name="Davis C."/>
            <person name="Delgado O."/>
            <person name="Dinh H.H."/>
            <person name="Draper H."/>
            <person name="Gonzalez-Garay M.L."/>
            <person name="Havlak P."/>
            <person name="Jackson L.R."/>
            <person name="Jacob L.S."/>
            <person name="Kelly S.H."/>
            <person name="Li L."/>
            <person name="Li Z."/>
            <person name="Liu J."/>
            <person name="Liu W."/>
            <person name="Lu J."/>
            <person name="Maheshwari M."/>
            <person name="Nguyen B.-V."/>
            <person name="Okwuonu G.O."/>
            <person name="Pasternak S."/>
            <person name="Perez L.M."/>
            <person name="Plopper F.J.H."/>
            <person name="Santibanez J."/>
            <person name="Shen H."/>
            <person name="Tabor P.E."/>
            <person name="Verduzco D."/>
            <person name="Waldron L."/>
            <person name="Wang Q."/>
            <person name="Williams G.A."/>
            <person name="Zhang J."/>
            <person name="Zhou J."/>
            <person name="Allen C.C."/>
            <person name="Amin A.G."/>
            <person name="Anyalebechi V."/>
            <person name="Bailey M."/>
            <person name="Barbaria J.A."/>
            <person name="Bimage K.E."/>
            <person name="Bryant N.P."/>
            <person name="Burch P.E."/>
            <person name="Burkett C.E."/>
            <person name="Burrell K.L."/>
            <person name="Calderon E."/>
            <person name="Cardenas V."/>
            <person name="Carter K."/>
            <person name="Casias K."/>
            <person name="Cavazos I."/>
            <person name="Cavazos S.R."/>
            <person name="Ceasar H."/>
            <person name="Chacko J."/>
            <person name="Chan S.N."/>
            <person name="Chavez D."/>
            <person name="Christopoulos C."/>
            <person name="Chu J."/>
            <person name="Cockrell R."/>
            <person name="Cox C.D."/>
            <person name="Dang M."/>
            <person name="Dathorne S.R."/>
            <person name="David R."/>
            <person name="Davis C.M."/>
            <person name="Davy-Carroll L."/>
            <person name="Deshazo D.R."/>
            <person name="Donlin J.E."/>
            <person name="D'Souza L."/>
            <person name="Eaves K.A."/>
            <person name="Egan A."/>
            <person name="Emery-Cohen A.J."/>
            <person name="Escotto M."/>
            <person name="Flagg N."/>
            <person name="Forbes L.D."/>
            <person name="Gabisi A.M."/>
            <person name="Garza M."/>
            <person name="Hamilton C."/>
            <person name="Henderson N."/>
            <person name="Hernandez O."/>
            <person name="Hines S."/>
            <person name="Hogues M.E."/>
            <person name="Huang M."/>
            <person name="Idlebird D.G."/>
            <person name="Johnson R."/>
            <person name="Jolivet A."/>
            <person name="Jones S."/>
            <person name="Kagan R."/>
            <person name="King L.M."/>
            <person name="Leal B."/>
            <person name="Lebow H."/>
            <person name="Lee S."/>
            <person name="LeVan J.M."/>
            <person name="Lewis L.C."/>
            <person name="London P."/>
            <person name="Lorensuhewa L.M."/>
            <person name="Loulseged H."/>
            <person name="Lovett D.A."/>
            <person name="Lucier A."/>
            <person name="Lucier R.L."/>
            <person name="Ma J."/>
            <person name="Madu R.C."/>
            <person name="Mapua P."/>
            <person name="Martindale A.D."/>
            <person name="Martinez E."/>
            <person name="Massey E."/>
            <person name="Mawhiney S."/>
            <person name="Meador M.G."/>
            <person name="Mendez S."/>
            <person name="Mercado C."/>
            <person name="Mercado I.C."/>
            <person name="Merritt C.E."/>
            <person name="Miner Z.L."/>
            <person name="Minja E."/>
            <person name="Mitchell T."/>
            <person name="Mohabbat F."/>
            <person name="Mohabbat K."/>
            <person name="Montgomery B."/>
            <person name="Moore N."/>
            <person name="Morris S."/>
            <person name="Munidasa M."/>
            <person name="Ngo R.N."/>
            <person name="Nguyen N.B."/>
            <person name="Nickerson E."/>
            <person name="Nwaokelemeh O.O."/>
            <person name="Nwokenkwo S."/>
            <person name="Obregon M."/>
            <person name="Oguh M."/>
            <person name="Oragunye N."/>
            <person name="Oviedo R.J."/>
            <person name="Parish B.J."/>
            <person name="Parker D.N."/>
            <person name="Parrish J."/>
            <person name="Parks K.L."/>
            <person name="Paul H.A."/>
            <person name="Payton B.A."/>
            <person name="Perez A."/>
            <person name="Perrin W."/>
            <person name="Pickens A."/>
            <person name="Primus E.L."/>
            <person name="Pu L.-L."/>
            <person name="Puazo M."/>
            <person name="Quiles M.M."/>
            <person name="Quiroz J.B."/>
            <person name="Rabata D."/>
            <person name="Reeves K."/>
            <person name="Ruiz S.J."/>
            <person name="Shao H."/>
            <person name="Sisson I."/>
            <person name="Sonaike T."/>
            <person name="Sorelle R.P."/>
            <person name="Sutton A.E."/>
            <person name="Svatek A.F."/>
            <person name="Svetz L.A."/>
            <person name="Tamerisa K.S."/>
            <person name="Taylor T.R."/>
            <person name="Teague B."/>
            <person name="Thomas N."/>
            <person name="Thorn R.D."/>
            <person name="Trejos Z.Y."/>
            <person name="Trevino B.K."/>
            <person name="Ukegbu O.N."/>
            <person name="Urban J.B."/>
            <person name="Vasquez L.I."/>
            <person name="Vera V.A."/>
            <person name="Villasana D.M."/>
            <person name="Wang L."/>
            <person name="Ward-Moore S."/>
            <person name="Warren J.T."/>
            <person name="Wei X."/>
            <person name="White F."/>
            <person name="Williamson A.L."/>
            <person name="Wleczyk R."/>
            <person name="Wooden H.S."/>
            <person name="Wooden S.H."/>
            <person name="Yen J."/>
            <person name="Yoon L."/>
            <person name="Yoon V."/>
            <person name="Zorrilla S.E."/>
            <person name="Nelson D."/>
            <person name="Kucherlapati R."/>
            <person name="Weinstock G."/>
            <person name="Gibbs R.A."/>
        </authorList>
    </citation>
    <scope>NUCLEOTIDE SEQUENCE [LARGE SCALE GENOMIC DNA]</scope>
</reference>
<reference key="7">
    <citation type="submission" date="2005-07" db="EMBL/GenBank/DDBJ databases">
        <authorList>
            <person name="Mural R.J."/>
            <person name="Istrail S."/>
            <person name="Sutton G.G."/>
            <person name="Florea L."/>
            <person name="Halpern A.L."/>
            <person name="Mobarry C.M."/>
            <person name="Lippert R."/>
            <person name="Walenz B."/>
            <person name="Shatkay H."/>
            <person name="Dew I."/>
            <person name="Miller J.R."/>
            <person name="Flanigan M.J."/>
            <person name="Edwards N.J."/>
            <person name="Bolanos R."/>
            <person name="Fasulo D."/>
            <person name="Halldorsson B.V."/>
            <person name="Hannenhalli S."/>
            <person name="Turner R."/>
            <person name="Yooseph S."/>
            <person name="Lu F."/>
            <person name="Nusskern D.R."/>
            <person name="Shue B.C."/>
            <person name="Zheng X.H."/>
            <person name="Zhong F."/>
            <person name="Delcher A.L."/>
            <person name="Huson D.H."/>
            <person name="Kravitz S.A."/>
            <person name="Mouchard L."/>
            <person name="Reinert K."/>
            <person name="Remington K.A."/>
            <person name="Clark A.G."/>
            <person name="Waterman M.S."/>
            <person name="Eichler E.E."/>
            <person name="Adams M.D."/>
            <person name="Hunkapiller M.W."/>
            <person name="Myers E.W."/>
            <person name="Venter J.C."/>
        </authorList>
    </citation>
    <scope>NUCLEOTIDE SEQUENCE [LARGE SCALE GENOMIC DNA]</scope>
</reference>
<reference key="8">
    <citation type="journal article" date="2004" name="Genome Res.">
        <title>The status, quality, and expansion of the NIH full-length cDNA project: the Mammalian Gene Collection (MGC).</title>
        <authorList>
            <consortium name="The MGC Project Team"/>
        </authorList>
    </citation>
    <scope>NUCLEOTIDE SEQUENCE [LARGE SCALE MRNA] (ISOFORM 4)</scope>
    <source>
        <tissue>Prostate</tissue>
    </source>
</reference>
<reference key="9">
    <citation type="journal article" date="2007" name="BMC Genomics">
        <title>The full-ORF clone resource of the German cDNA consortium.</title>
        <authorList>
            <person name="Bechtel S."/>
            <person name="Rosenfelder H."/>
            <person name="Duda A."/>
            <person name="Schmidt C.P."/>
            <person name="Ernst U."/>
            <person name="Wellenreuther R."/>
            <person name="Mehrle A."/>
            <person name="Schuster C."/>
            <person name="Bahr A."/>
            <person name="Bloecker H."/>
            <person name="Heubner D."/>
            <person name="Hoerlein A."/>
            <person name="Michel G."/>
            <person name="Wedler H."/>
            <person name="Koehrer K."/>
            <person name="Ottenwaelder B."/>
            <person name="Poustka A."/>
            <person name="Wiemann S."/>
            <person name="Schupp I."/>
        </authorList>
    </citation>
    <scope>NUCLEOTIDE SEQUENCE [LARGE SCALE MRNA] OF 79-386 (ISOFORMS 1/4)</scope>
    <source>
        <tissue>Uterus</tissue>
    </source>
</reference>
<reference key="10">
    <citation type="journal article" date="2007" name="Cell">
        <title>Hzf Determines cell survival upon genotoxic stress by modulating p53 transactivation.</title>
        <authorList>
            <person name="Das S."/>
            <person name="Raj L."/>
            <person name="Zhao B."/>
            <person name="Kimura Y."/>
            <person name="Bernstein A."/>
            <person name="Aaronson S.A."/>
            <person name="Lee S.W."/>
        </authorList>
    </citation>
    <scope>FUNCTION IN TP53-DEPENDENT CELL CYCLE ARREST</scope>
    <scope>INTERACTION WITH TP53</scope>
    <scope>INDUCTION</scope>
    <scope>UBIQUITINATION</scope>
</reference>
<reference key="11">
    <citation type="journal article" date="2013" name="J. Proteome Res.">
        <title>Toward a comprehensive characterization of a human cancer cell phosphoproteome.</title>
        <authorList>
            <person name="Zhou H."/>
            <person name="Di Palma S."/>
            <person name="Preisinger C."/>
            <person name="Peng M."/>
            <person name="Polat A.N."/>
            <person name="Heck A.J."/>
            <person name="Mohammed S."/>
        </authorList>
    </citation>
    <scope>PHOSPHORYLATION [LARGE SCALE ANALYSIS] AT SER-185 AND THR-248</scope>
    <scope>IDENTIFICATION BY MASS SPECTROMETRY [LARGE SCALE ANALYSIS]</scope>
    <source>
        <tissue>Cervix carcinoma</tissue>
        <tissue>Erythroleukemia</tissue>
    </source>
</reference>
<dbReference type="EMBL" id="AY461717">
    <property type="protein sequence ID" value="AAS19275.1"/>
    <property type="molecule type" value="mRNA"/>
</dbReference>
<dbReference type="EMBL" id="AF304052">
    <property type="protein sequence ID" value="AAL08625.1"/>
    <property type="molecule type" value="mRNA"/>
</dbReference>
<dbReference type="EMBL" id="AK024404">
    <property type="protein sequence ID" value="BAB14910.1"/>
    <property type="molecule type" value="mRNA"/>
</dbReference>
<dbReference type="EMBL" id="AK296564">
    <property type="protein sequence ID" value="BAG59184.1"/>
    <property type="molecule type" value="mRNA"/>
</dbReference>
<dbReference type="EMBL" id="AK315613">
    <property type="protein sequence ID" value="BAG37982.1"/>
    <property type="molecule type" value="mRNA"/>
</dbReference>
<dbReference type="EMBL" id="CR457327">
    <property type="protein sequence ID" value="CAG33608.1"/>
    <property type="molecule type" value="mRNA"/>
</dbReference>
<dbReference type="EMBL" id="AB593085">
    <property type="protein sequence ID" value="BAJ84025.1"/>
    <property type="molecule type" value="mRNA"/>
</dbReference>
<dbReference type="EMBL" id="AC078778">
    <property type="status" value="NOT_ANNOTATED_CDS"/>
    <property type="molecule type" value="Genomic_DNA"/>
</dbReference>
<dbReference type="EMBL" id="AC079313">
    <property type="status" value="NOT_ANNOTATED_CDS"/>
    <property type="molecule type" value="Genomic_DNA"/>
</dbReference>
<dbReference type="EMBL" id="CH471054">
    <property type="protein sequence ID" value="EAW96777.1"/>
    <property type="molecule type" value="Genomic_DNA"/>
</dbReference>
<dbReference type="EMBL" id="BC029752">
    <property type="protein sequence ID" value="AAH29752.1"/>
    <property type="molecule type" value="mRNA"/>
</dbReference>
<dbReference type="EMBL" id="AL117462">
    <property type="protein sequence ID" value="CAB55938.1"/>
    <property type="molecule type" value="mRNA"/>
</dbReference>
<dbReference type="CCDS" id="CCDS44910.1">
    <molecule id="Q96PM9-3"/>
</dbReference>
<dbReference type="CCDS" id="CCDS44911.1">
    <molecule id="Q96PM9-4"/>
</dbReference>
<dbReference type="CCDS" id="CCDS76563.1">
    <molecule id="Q96PM9-2"/>
</dbReference>
<dbReference type="CCDS" id="CCDS8879.1">
    <molecule id="Q96PM9-1"/>
</dbReference>
<dbReference type="PIR" id="T17248">
    <property type="entry name" value="T17248"/>
</dbReference>
<dbReference type="RefSeq" id="NP_001124439.1">
    <molecule id="Q96PM9-4"/>
    <property type="nucleotide sequence ID" value="NM_001130967.3"/>
</dbReference>
<dbReference type="RefSeq" id="NP_001124440.1">
    <molecule id="Q96PM9-3"/>
    <property type="nucleotide sequence ID" value="NM_001130968.3"/>
</dbReference>
<dbReference type="RefSeq" id="NP_001276930.1">
    <molecule id="Q96PM9-2"/>
    <property type="nucleotide sequence ID" value="NM_001290001.2"/>
</dbReference>
<dbReference type="RefSeq" id="NP_001276931.1">
    <molecule id="Q96PM9-1"/>
    <property type="nucleotide sequence ID" value="NM_001290002.2"/>
</dbReference>
<dbReference type="RefSeq" id="NP_001276933.1">
    <molecule id="Q96PM9-1"/>
    <property type="nucleotide sequence ID" value="NM_001290004.2"/>
</dbReference>
<dbReference type="RefSeq" id="NP_056296.1">
    <molecule id="Q96PM9-1"/>
    <property type="nucleotide sequence ID" value="NM_015481.3"/>
</dbReference>
<dbReference type="RefSeq" id="XP_005268840.1">
    <molecule id="Q96PM9-1"/>
    <property type="nucleotide sequence ID" value="XM_005268783.5"/>
</dbReference>
<dbReference type="RefSeq" id="XP_006719405.1">
    <property type="nucleotide sequence ID" value="XM_006719342.2"/>
</dbReference>
<dbReference type="RefSeq" id="XP_016874663.1">
    <property type="nucleotide sequence ID" value="XM_017019174.1"/>
</dbReference>
<dbReference type="RefSeq" id="XP_024304703.1">
    <molecule id="Q96PM9-2"/>
    <property type="nucleotide sequence ID" value="XM_024448935.2"/>
</dbReference>
<dbReference type="RefSeq" id="XP_047284650.1">
    <molecule id="Q96PM9-1"/>
    <property type="nucleotide sequence ID" value="XM_047428694.1"/>
</dbReference>
<dbReference type="RefSeq" id="XP_047284651.1">
    <molecule id="Q96PM9-1"/>
    <property type="nucleotide sequence ID" value="XM_047428695.1"/>
</dbReference>
<dbReference type="RefSeq" id="XP_047284652.1">
    <molecule id="Q96PM9-1"/>
    <property type="nucleotide sequence ID" value="XM_047428696.1"/>
</dbReference>
<dbReference type="RefSeq" id="XP_047284654.1">
    <molecule id="Q96PM9-2"/>
    <property type="nucleotide sequence ID" value="XM_047428698.1"/>
</dbReference>
<dbReference type="RefSeq" id="XP_054227694.1">
    <molecule id="Q96PM9-1"/>
    <property type="nucleotide sequence ID" value="XM_054371719.1"/>
</dbReference>
<dbReference type="RefSeq" id="XP_054227695.1">
    <molecule id="Q96PM9-1"/>
    <property type="nucleotide sequence ID" value="XM_054371720.1"/>
</dbReference>
<dbReference type="RefSeq" id="XP_054227696.1">
    <molecule id="Q96PM9-1"/>
    <property type="nucleotide sequence ID" value="XM_054371721.1"/>
</dbReference>
<dbReference type="RefSeq" id="XP_054227697.1">
    <molecule id="Q96PM9-1"/>
    <property type="nucleotide sequence ID" value="XM_054371722.1"/>
</dbReference>
<dbReference type="RefSeq" id="XP_054227701.1">
    <molecule id="Q96PM9-2"/>
    <property type="nucleotide sequence ID" value="XM_054371726.1"/>
</dbReference>
<dbReference type="RefSeq" id="XP_054227702.1">
    <molecule id="Q96PM9-2"/>
    <property type="nucleotide sequence ID" value="XM_054371727.1"/>
</dbReference>
<dbReference type="BioGRID" id="117442">
    <property type="interactions" value="29"/>
</dbReference>
<dbReference type="FunCoup" id="Q96PM9">
    <property type="interactions" value="381"/>
</dbReference>
<dbReference type="IntAct" id="Q96PM9">
    <property type="interactions" value="12"/>
</dbReference>
<dbReference type="STRING" id="9606.ENSP00000338927"/>
<dbReference type="GlyGen" id="Q96PM9">
    <property type="glycosylation" value="3 sites"/>
</dbReference>
<dbReference type="iPTMnet" id="Q96PM9"/>
<dbReference type="PhosphoSitePlus" id="Q96PM9"/>
<dbReference type="BioMuta" id="ZNF385A"/>
<dbReference type="DMDM" id="527504071"/>
<dbReference type="jPOST" id="Q96PM9"/>
<dbReference type="MassIVE" id="Q96PM9"/>
<dbReference type="PaxDb" id="9606-ENSP00000338927"/>
<dbReference type="PeptideAtlas" id="Q96PM9"/>
<dbReference type="ProteomicsDB" id="77713">
    <molecule id="Q96PM9-4"/>
</dbReference>
<dbReference type="ProteomicsDB" id="77714">
    <molecule id="Q96PM9-2"/>
</dbReference>
<dbReference type="Pumba" id="Q96PM9"/>
<dbReference type="Antibodypedia" id="15350">
    <property type="antibodies" value="114 antibodies from 20 providers"/>
</dbReference>
<dbReference type="DNASU" id="25946"/>
<dbReference type="Ensembl" id="ENST00000338010.9">
    <molecule id="Q96PM9-4"/>
    <property type="protein sequence ID" value="ENSP00000338927.5"/>
    <property type="gene ID" value="ENSG00000161642.18"/>
</dbReference>
<dbReference type="Ensembl" id="ENST00000352268.10">
    <molecule id="Q96PM9-3"/>
    <property type="protein sequence ID" value="ENSP00000293385.9"/>
    <property type="gene ID" value="ENSG00000161642.18"/>
</dbReference>
<dbReference type="Ensembl" id="ENST00000394313.7">
    <molecule id="Q96PM9-1"/>
    <property type="protein sequence ID" value="ENSP00000377849.2"/>
    <property type="gene ID" value="ENSG00000161642.18"/>
</dbReference>
<dbReference type="Ensembl" id="ENST00000546970.5">
    <molecule id="Q96PM9-1"/>
    <property type="protein sequence ID" value="ENSP00000446913.1"/>
    <property type="gene ID" value="ENSG00000161642.18"/>
</dbReference>
<dbReference type="Ensembl" id="ENST00000551109.5">
    <molecule id="Q96PM9-1"/>
    <property type="protein sequence ID" value="ENSP00000449161.1"/>
    <property type="gene ID" value="ENSG00000161642.18"/>
</dbReference>
<dbReference type="Ensembl" id="ENST00000551771.5">
    <molecule id="Q96PM9-2"/>
    <property type="protein sequence ID" value="ENSP00000447162.1"/>
    <property type="gene ID" value="ENSG00000161642.18"/>
</dbReference>
<dbReference type="GeneID" id="25946"/>
<dbReference type="KEGG" id="hsa:25946"/>
<dbReference type="MANE-Select" id="ENST00000394313.7">
    <molecule id="Q96PM9-1"/>
    <property type="protein sequence ID" value="ENSP00000377849.2"/>
    <property type="RefSeq nucleotide sequence ID" value="NM_015481.3"/>
    <property type="RefSeq protein sequence ID" value="NP_056296.1"/>
</dbReference>
<dbReference type="UCSC" id="uc001sfw.2">
    <molecule id="Q96PM9-4"/>
    <property type="organism name" value="human"/>
</dbReference>
<dbReference type="AGR" id="HGNC:17521"/>
<dbReference type="CTD" id="25946"/>
<dbReference type="GeneCards" id="ZNF385A"/>
<dbReference type="HGNC" id="HGNC:17521">
    <property type="gene designation" value="ZNF385A"/>
</dbReference>
<dbReference type="HPA" id="ENSG00000161642">
    <property type="expression patterns" value="Tissue enhanced (retina, skin)"/>
</dbReference>
<dbReference type="MIM" id="609124">
    <property type="type" value="gene"/>
</dbReference>
<dbReference type="neXtProt" id="NX_Q96PM9"/>
<dbReference type="OpenTargets" id="ENSG00000161642"/>
<dbReference type="PharmGKB" id="PA162410095"/>
<dbReference type="VEuPathDB" id="HostDB:ENSG00000161642"/>
<dbReference type="eggNOG" id="ENOG502QWH6">
    <property type="taxonomic scope" value="Eukaryota"/>
</dbReference>
<dbReference type="GeneTree" id="ENSGT00940000160876"/>
<dbReference type="HOGENOM" id="CLU_027876_1_0_1"/>
<dbReference type="InParanoid" id="Q96PM9"/>
<dbReference type="OMA" id="ERSFHCQ"/>
<dbReference type="OrthoDB" id="9448812at2759"/>
<dbReference type="PAN-GO" id="Q96PM9">
    <property type="GO annotations" value="5 GO annotations based on evolutionary models"/>
</dbReference>
<dbReference type="PhylomeDB" id="Q96PM9"/>
<dbReference type="TreeFam" id="TF326622"/>
<dbReference type="PathwayCommons" id="Q96PM9"/>
<dbReference type="Reactome" id="R-HSA-6804114">
    <property type="pathway name" value="TP53 Regulates Transcription of Genes Involved in G2 Cell Cycle Arrest"/>
</dbReference>
<dbReference type="Reactome" id="R-HSA-6804116">
    <property type="pathway name" value="TP53 Regulates Transcription of Genes Involved in G1 Cell Cycle Arrest"/>
</dbReference>
<dbReference type="Reactome" id="R-HSA-6804759">
    <property type="pathway name" value="Regulation of TP53 Activity through Association with Co-factors"/>
</dbReference>
<dbReference type="Reactome" id="R-HSA-69895">
    <property type="pathway name" value="Transcriptional activation of cell cycle inhibitor p21"/>
</dbReference>
<dbReference type="SignaLink" id="Q96PM9"/>
<dbReference type="BioGRID-ORCS" id="25946">
    <property type="hits" value="14 hits in 1161 CRISPR screens"/>
</dbReference>
<dbReference type="CD-CODE" id="91857CE7">
    <property type="entry name" value="Nucleolus"/>
</dbReference>
<dbReference type="ChiTaRS" id="ZNF385A">
    <property type="organism name" value="human"/>
</dbReference>
<dbReference type="GenomeRNAi" id="25946"/>
<dbReference type="Pharos" id="Q96PM9">
    <property type="development level" value="Tbio"/>
</dbReference>
<dbReference type="PRO" id="PR:Q96PM9"/>
<dbReference type="Proteomes" id="UP000005640">
    <property type="component" value="Chromosome 12"/>
</dbReference>
<dbReference type="RNAct" id="Q96PM9">
    <property type="molecule type" value="protein"/>
</dbReference>
<dbReference type="Bgee" id="ENSG00000161642">
    <property type="expression patterns" value="Expressed in skin of leg and 170 other cell types or tissues"/>
</dbReference>
<dbReference type="ExpressionAtlas" id="Q96PM9">
    <property type="expression patterns" value="baseline and differential"/>
</dbReference>
<dbReference type="GO" id="GO:0000785">
    <property type="term" value="C:chromatin"/>
    <property type="evidence" value="ECO:0000314"/>
    <property type="project" value="UniProtKB"/>
</dbReference>
<dbReference type="GO" id="GO:0005829">
    <property type="term" value="C:cytosol"/>
    <property type="evidence" value="ECO:0000314"/>
    <property type="project" value="HPA"/>
</dbReference>
<dbReference type="GO" id="GO:0030425">
    <property type="term" value="C:dendrite"/>
    <property type="evidence" value="ECO:0000250"/>
    <property type="project" value="UniProtKB"/>
</dbReference>
<dbReference type="GO" id="GO:0043025">
    <property type="term" value="C:neuronal cell body"/>
    <property type="evidence" value="ECO:0000250"/>
    <property type="project" value="UniProtKB"/>
</dbReference>
<dbReference type="GO" id="GO:0005730">
    <property type="term" value="C:nucleolus"/>
    <property type="evidence" value="ECO:0007669"/>
    <property type="project" value="UniProtKB-SubCell"/>
</dbReference>
<dbReference type="GO" id="GO:0005654">
    <property type="term" value="C:nucleoplasm"/>
    <property type="evidence" value="ECO:0000314"/>
    <property type="project" value="HPA"/>
</dbReference>
<dbReference type="GO" id="GO:0005634">
    <property type="term" value="C:nucleus"/>
    <property type="evidence" value="ECO:0000318"/>
    <property type="project" value="GO_Central"/>
</dbReference>
<dbReference type="GO" id="GO:0003677">
    <property type="term" value="F:DNA binding"/>
    <property type="evidence" value="ECO:0007669"/>
    <property type="project" value="UniProtKB-KW"/>
</dbReference>
<dbReference type="GO" id="GO:0003730">
    <property type="term" value="F:mRNA 3'-UTR binding"/>
    <property type="evidence" value="ECO:0000250"/>
    <property type="project" value="UniProtKB"/>
</dbReference>
<dbReference type="GO" id="GO:0002039">
    <property type="term" value="F:p53 binding"/>
    <property type="evidence" value="ECO:0000353"/>
    <property type="project" value="UniProtKB"/>
</dbReference>
<dbReference type="GO" id="GO:0003723">
    <property type="term" value="F:RNA binding"/>
    <property type="evidence" value="ECO:0007005"/>
    <property type="project" value="UniProtKB"/>
</dbReference>
<dbReference type="GO" id="GO:0008270">
    <property type="term" value="F:zinc ion binding"/>
    <property type="evidence" value="ECO:0007669"/>
    <property type="project" value="UniProtKB-KW"/>
</dbReference>
<dbReference type="GO" id="GO:0006915">
    <property type="term" value="P:apoptotic process"/>
    <property type="evidence" value="ECO:0000250"/>
    <property type="project" value="UniProtKB"/>
</dbReference>
<dbReference type="GO" id="GO:0006974">
    <property type="term" value="P:DNA damage response"/>
    <property type="evidence" value="ECO:0000250"/>
    <property type="project" value="UniProtKB"/>
</dbReference>
<dbReference type="GO" id="GO:0007599">
    <property type="term" value="P:hemostasis"/>
    <property type="evidence" value="ECO:0007669"/>
    <property type="project" value="Ensembl"/>
</dbReference>
<dbReference type="GO" id="GO:0007611">
    <property type="term" value="P:learning or memory"/>
    <property type="evidence" value="ECO:0007669"/>
    <property type="project" value="Ensembl"/>
</dbReference>
<dbReference type="GO" id="GO:0007626">
    <property type="term" value="P:locomotory behavior"/>
    <property type="evidence" value="ECO:0007669"/>
    <property type="project" value="Ensembl"/>
</dbReference>
<dbReference type="GO" id="GO:0035855">
    <property type="term" value="P:megakaryocyte development"/>
    <property type="evidence" value="ECO:0000250"/>
    <property type="project" value="UniProtKB"/>
</dbReference>
<dbReference type="GO" id="GO:0010609">
    <property type="term" value="P:mRNA localization resulting in post-transcriptional regulation of gene expression"/>
    <property type="evidence" value="ECO:0000250"/>
    <property type="project" value="UniProtKB"/>
</dbReference>
<dbReference type="GO" id="GO:1902166">
    <property type="term" value="P:negative regulation of intrinsic apoptotic signaling pathway in response to DNA damage by p53 class mediator"/>
    <property type="evidence" value="ECO:0000315"/>
    <property type="project" value="UniProtKB"/>
</dbReference>
<dbReference type="GO" id="GO:0070889">
    <property type="term" value="P:platelet alpha granule organization"/>
    <property type="evidence" value="ECO:0007669"/>
    <property type="project" value="Ensembl"/>
</dbReference>
<dbReference type="GO" id="GO:0030220">
    <property type="term" value="P:platelet formation"/>
    <property type="evidence" value="ECO:0007669"/>
    <property type="project" value="Ensembl"/>
</dbReference>
<dbReference type="GO" id="GO:0043517">
    <property type="term" value="P:positive regulation of DNA damage response, signal transduction by p53 class mediator"/>
    <property type="evidence" value="ECO:0000315"/>
    <property type="project" value="UniProtKB"/>
</dbReference>
<dbReference type="GO" id="GO:0045600">
    <property type="term" value="P:positive regulation of fat cell differentiation"/>
    <property type="evidence" value="ECO:0000250"/>
    <property type="project" value="UniProtKB"/>
</dbReference>
<dbReference type="GO" id="GO:2000765">
    <property type="term" value="P:regulation of cytoplasmic translation"/>
    <property type="evidence" value="ECO:0000250"/>
    <property type="project" value="UniProtKB"/>
</dbReference>
<dbReference type="FunFam" id="3.30.160.60:FF:000276">
    <property type="entry name" value="zinc finger protein 385A isoform X3"/>
    <property type="match status" value="1"/>
</dbReference>
<dbReference type="FunFam" id="3.30.160.60:FF:000121">
    <property type="entry name" value="zinc finger protein 385B isoform X1"/>
    <property type="match status" value="1"/>
</dbReference>
<dbReference type="FunFam" id="3.30.160.60:FF:000293">
    <property type="entry name" value="zinc finger protein 385B isoform X3"/>
    <property type="match status" value="1"/>
</dbReference>
<dbReference type="Gene3D" id="3.30.160.60">
    <property type="entry name" value="Classic Zinc Finger"/>
    <property type="match status" value="3"/>
</dbReference>
<dbReference type="InterPro" id="IPR003604">
    <property type="entry name" value="Matrin/U1-like-C_Znf_C2H2"/>
</dbReference>
<dbReference type="InterPro" id="IPR051845">
    <property type="entry name" value="Znf385"/>
</dbReference>
<dbReference type="InterPro" id="IPR036236">
    <property type="entry name" value="Znf_C2H2_sf"/>
</dbReference>
<dbReference type="InterPro" id="IPR013087">
    <property type="entry name" value="Znf_C2H2_type"/>
</dbReference>
<dbReference type="PANTHER" id="PTHR23067">
    <property type="entry name" value="DOUBLE-STRANDED RNA-BINDING ZINC FINGER PROTEIN"/>
    <property type="match status" value="1"/>
</dbReference>
<dbReference type="PANTHER" id="PTHR23067:SF13">
    <property type="entry name" value="ZINC FINGER PROTEIN 385A"/>
    <property type="match status" value="1"/>
</dbReference>
<dbReference type="Pfam" id="PF12874">
    <property type="entry name" value="zf-met"/>
    <property type="match status" value="3"/>
</dbReference>
<dbReference type="SMART" id="SM00355">
    <property type="entry name" value="ZnF_C2H2"/>
    <property type="match status" value="3"/>
</dbReference>
<dbReference type="SMART" id="SM00451">
    <property type="entry name" value="ZnF_U1"/>
    <property type="match status" value="3"/>
</dbReference>
<dbReference type="SUPFAM" id="SSF57667">
    <property type="entry name" value="beta-beta-alpha zinc fingers"/>
    <property type="match status" value="3"/>
</dbReference>